<name>IF2_CROS8</name>
<evidence type="ECO:0000250" key="1"/>
<evidence type="ECO:0000255" key="2">
    <source>
        <dbReference type="HAMAP-Rule" id="MF_00100"/>
    </source>
</evidence>
<evidence type="ECO:0000256" key="3">
    <source>
        <dbReference type="SAM" id="MobiDB-lite"/>
    </source>
</evidence>
<proteinExistence type="inferred from homology"/>
<feature type="chain" id="PRO_1000008241" description="Translation initiation factor IF-2">
    <location>
        <begin position="1"/>
        <end position="903"/>
    </location>
</feature>
<feature type="domain" description="tr-type G">
    <location>
        <begin position="402"/>
        <end position="571"/>
    </location>
</feature>
<feature type="region of interest" description="Disordered" evidence="3">
    <location>
        <begin position="49"/>
        <end position="314"/>
    </location>
</feature>
<feature type="region of interest" description="G1" evidence="1">
    <location>
        <begin position="411"/>
        <end position="418"/>
    </location>
</feature>
<feature type="region of interest" description="G2" evidence="1">
    <location>
        <begin position="436"/>
        <end position="440"/>
    </location>
</feature>
<feature type="region of interest" description="G3" evidence="1">
    <location>
        <begin position="457"/>
        <end position="460"/>
    </location>
</feature>
<feature type="region of interest" description="G4" evidence="1">
    <location>
        <begin position="511"/>
        <end position="514"/>
    </location>
</feature>
<feature type="region of interest" description="G5" evidence="1">
    <location>
        <begin position="547"/>
        <end position="549"/>
    </location>
</feature>
<feature type="compositionally biased region" description="Polar residues" evidence="3">
    <location>
        <begin position="68"/>
        <end position="82"/>
    </location>
</feature>
<feature type="compositionally biased region" description="Basic and acidic residues" evidence="3">
    <location>
        <begin position="93"/>
        <end position="163"/>
    </location>
</feature>
<feature type="compositionally biased region" description="Basic and acidic residues" evidence="3">
    <location>
        <begin position="174"/>
        <end position="225"/>
    </location>
</feature>
<feature type="compositionally biased region" description="Basic residues" evidence="3">
    <location>
        <begin position="265"/>
        <end position="279"/>
    </location>
</feature>
<feature type="compositionally biased region" description="Basic and acidic residues" evidence="3">
    <location>
        <begin position="280"/>
        <end position="293"/>
    </location>
</feature>
<feature type="binding site" evidence="2">
    <location>
        <begin position="411"/>
        <end position="418"/>
    </location>
    <ligand>
        <name>GTP</name>
        <dbReference type="ChEBI" id="CHEBI:37565"/>
    </ligand>
</feature>
<feature type="binding site" evidence="2">
    <location>
        <begin position="457"/>
        <end position="461"/>
    </location>
    <ligand>
        <name>GTP</name>
        <dbReference type="ChEBI" id="CHEBI:37565"/>
    </ligand>
</feature>
<feature type="binding site" evidence="2">
    <location>
        <begin position="511"/>
        <end position="514"/>
    </location>
    <ligand>
        <name>GTP</name>
        <dbReference type="ChEBI" id="CHEBI:37565"/>
    </ligand>
</feature>
<sequence>MTDVTVKALAAEIQTSVDRLVQQFADAGIPKSAEDSVTAQEKQALLAHLNREHGSGPDKLTLQRKTRSTLNIQGTGGKSKSVQIEVRKKRTFVKRDPQEAERLAAEEQAKREAEEQARREAEEAAKREAEEKAKREAGDKAKREAEEQAKRDAADKAKREAAETSKVSNQQTDEVSKAAQAEKARREAEALELKRKAEEEARRKLEENARRVAEEARRMAEENATKWESGSEEESEDTSDYHVTTSQHARQAEDDSDREVEGGRGRARPAKVARQKKSNKHSESKADREEARAAVRGGKGGKRKGSSLQQGFNKPAQAVNRDVVIGETITVAELANKMAVKGSQVIKAMMKLGAMATINQVIDQETAQLVAEEMGHKVILRRENELEEAVMSDRDMGAQAEPRAPVVTIMGHVDHGKTSLLDYIRSTKVASGEAGGITQHIGAYHVQTDNGMITFLDTPGHAAFTAMRARGAQATDIVVLVVAADDGVMPQTIEAIQHAKAAKVPVVVAVNKIDKPDADPDRVKNELSQHGIIPEEWGGDCQFVHVSAKAGTGIDELLDAILLQSEVLELKAVRKGMASGVVIESFLDKGRGPVATVLVREGTLNKGDIVLCGFEYGRVRAMRNELNQEVQEAGPSIPVEILGLSGVPAAGDEVTVVRDEKKAREVALYRQGKFREVKLARQQKSKLENMFANMTEGEVHEVNIVLKADVQGSVEAISDSLLKLSTDEVKVKIVGSGVGGITETDATLAAASNAILVGFNVRADASARRVIEAESLDLRYYSVIYNLIDEVKAAMSGMLSPELKQQIIGLAEVRDVFKSPKFGAIAGCMVTEGTIKRHNPIRVLRDNVVIYEGELESLRRFKDDVNEVRNGMECGIGVKNYNDVRVGDMIEVFEIIEIQRSID</sequence>
<reference key="1">
    <citation type="journal article" date="2010" name="PLoS ONE">
        <title>Genome sequence of Cronobacter sakazakii BAA-894 and comparative genomic hybridization analysis with other Cronobacter species.</title>
        <authorList>
            <person name="Kucerova E."/>
            <person name="Clifton S.W."/>
            <person name="Xia X.Q."/>
            <person name="Long F."/>
            <person name="Porwollik S."/>
            <person name="Fulton L."/>
            <person name="Fronick C."/>
            <person name="Minx P."/>
            <person name="Kyung K."/>
            <person name="Warren W."/>
            <person name="Fulton R."/>
            <person name="Feng D."/>
            <person name="Wollam A."/>
            <person name="Shah N."/>
            <person name="Bhonagiri V."/>
            <person name="Nash W.E."/>
            <person name="Hallsworth-Pepin K."/>
            <person name="Wilson R.K."/>
            <person name="McClelland M."/>
            <person name="Forsythe S.J."/>
        </authorList>
    </citation>
    <scope>NUCLEOTIDE SEQUENCE [LARGE SCALE GENOMIC DNA]</scope>
    <source>
        <strain>ATCC BAA-894</strain>
    </source>
</reference>
<organism>
    <name type="scientific">Cronobacter sakazakii (strain ATCC BAA-894)</name>
    <name type="common">Enterobacter sakazakii</name>
    <dbReference type="NCBI Taxonomy" id="290339"/>
    <lineage>
        <taxon>Bacteria</taxon>
        <taxon>Pseudomonadati</taxon>
        <taxon>Pseudomonadota</taxon>
        <taxon>Gammaproteobacteria</taxon>
        <taxon>Enterobacterales</taxon>
        <taxon>Enterobacteriaceae</taxon>
        <taxon>Cronobacter</taxon>
    </lineage>
</organism>
<keyword id="KW-0963">Cytoplasm</keyword>
<keyword id="KW-0342">GTP-binding</keyword>
<keyword id="KW-0396">Initiation factor</keyword>
<keyword id="KW-0547">Nucleotide-binding</keyword>
<keyword id="KW-0648">Protein biosynthesis</keyword>
<keyword id="KW-1185">Reference proteome</keyword>
<gene>
    <name evidence="2" type="primary">infB</name>
    <name type="ordered locus">ESA_03561</name>
</gene>
<accession>A7MQE1</accession>
<comment type="function">
    <text evidence="2">One of the essential components for the initiation of protein synthesis. Protects formylmethionyl-tRNA from spontaneous hydrolysis and promotes its binding to the 30S ribosomal subunits. Also involved in the hydrolysis of GTP during the formation of the 70S ribosomal complex.</text>
</comment>
<comment type="subcellular location">
    <subcellularLocation>
        <location evidence="2">Cytoplasm</location>
    </subcellularLocation>
</comment>
<comment type="similarity">
    <text evidence="2">Belongs to the TRAFAC class translation factor GTPase superfamily. Classic translation factor GTPase family. IF-2 subfamily.</text>
</comment>
<dbReference type="EMBL" id="CP000783">
    <property type="protein sequence ID" value="ABU78774.1"/>
    <property type="molecule type" value="Genomic_DNA"/>
</dbReference>
<dbReference type="RefSeq" id="WP_004385059.1">
    <property type="nucleotide sequence ID" value="NC_009778.1"/>
</dbReference>
<dbReference type="SMR" id="A7MQE1"/>
<dbReference type="GeneID" id="56732218"/>
<dbReference type="KEGG" id="esa:ESA_03561"/>
<dbReference type="HOGENOM" id="CLU_006301_6_3_6"/>
<dbReference type="Proteomes" id="UP000000260">
    <property type="component" value="Chromosome"/>
</dbReference>
<dbReference type="GO" id="GO:0005829">
    <property type="term" value="C:cytosol"/>
    <property type="evidence" value="ECO:0007669"/>
    <property type="project" value="TreeGrafter"/>
</dbReference>
<dbReference type="GO" id="GO:0005525">
    <property type="term" value="F:GTP binding"/>
    <property type="evidence" value="ECO:0007669"/>
    <property type="project" value="UniProtKB-KW"/>
</dbReference>
<dbReference type="GO" id="GO:0003924">
    <property type="term" value="F:GTPase activity"/>
    <property type="evidence" value="ECO:0007669"/>
    <property type="project" value="UniProtKB-UniRule"/>
</dbReference>
<dbReference type="GO" id="GO:0097216">
    <property type="term" value="F:guanosine tetraphosphate binding"/>
    <property type="evidence" value="ECO:0007669"/>
    <property type="project" value="UniProtKB-ARBA"/>
</dbReference>
<dbReference type="GO" id="GO:0003743">
    <property type="term" value="F:translation initiation factor activity"/>
    <property type="evidence" value="ECO:0007669"/>
    <property type="project" value="UniProtKB-UniRule"/>
</dbReference>
<dbReference type="CDD" id="cd01887">
    <property type="entry name" value="IF2_eIF5B"/>
    <property type="match status" value="1"/>
</dbReference>
<dbReference type="CDD" id="cd03702">
    <property type="entry name" value="IF2_mtIF2_II"/>
    <property type="match status" value="1"/>
</dbReference>
<dbReference type="CDD" id="cd03692">
    <property type="entry name" value="mtIF2_IVc"/>
    <property type="match status" value="1"/>
</dbReference>
<dbReference type="FunFam" id="2.40.30.10:FF:000007">
    <property type="entry name" value="Translation initiation factor IF-2"/>
    <property type="match status" value="1"/>
</dbReference>
<dbReference type="FunFam" id="2.40.30.10:FF:000008">
    <property type="entry name" value="Translation initiation factor IF-2"/>
    <property type="match status" value="1"/>
</dbReference>
<dbReference type="FunFam" id="3.30.56.50:FF:000001">
    <property type="entry name" value="Translation initiation factor IF-2"/>
    <property type="match status" value="1"/>
</dbReference>
<dbReference type="FunFam" id="3.40.50.10050:FF:000001">
    <property type="entry name" value="Translation initiation factor IF-2"/>
    <property type="match status" value="1"/>
</dbReference>
<dbReference type="FunFam" id="3.40.50.300:FF:000019">
    <property type="entry name" value="Translation initiation factor IF-2"/>
    <property type="match status" value="1"/>
</dbReference>
<dbReference type="Gene3D" id="3.40.50.300">
    <property type="entry name" value="P-loop containing nucleotide triphosphate hydrolases"/>
    <property type="match status" value="1"/>
</dbReference>
<dbReference type="Gene3D" id="3.30.56.50">
    <property type="entry name" value="Putative DNA-binding domain, N-terminal subdomain of bacterial translation initiation factor IF2"/>
    <property type="match status" value="1"/>
</dbReference>
<dbReference type="Gene3D" id="2.40.30.10">
    <property type="entry name" value="Translation factors"/>
    <property type="match status" value="2"/>
</dbReference>
<dbReference type="Gene3D" id="3.40.50.10050">
    <property type="entry name" value="Translation initiation factor IF- 2, domain 3"/>
    <property type="match status" value="1"/>
</dbReference>
<dbReference type="HAMAP" id="MF_00100_B">
    <property type="entry name" value="IF_2_B"/>
    <property type="match status" value="1"/>
</dbReference>
<dbReference type="InterPro" id="IPR009061">
    <property type="entry name" value="DNA-bd_dom_put_sf"/>
</dbReference>
<dbReference type="InterPro" id="IPR053905">
    <property type="entry name" value="EF-G-like_DII"/>
</dbReference>
<dbReference type="InterPro" id="IPR004161">
    <property type="entry name" value="EFTu-like_2"/>
</dbReference>
<dbReference type="InterPro" id="IPR013575">
    <property type="entry name" value="IF2_assoc_dom_bac"/>
</dbReference>
<dbReference type="InterPro" id="IPR044145">
    <property type="entry name" value="IF2_II"/>
</dbReference>
<dbReference type="InterPro" id="IPR006847">
    <property type="entry name" value="IF2_N"/>
</dbReference>
<dbReference type="InterPro" id="IPR027417">
    <property type="entry name" value="P-loop_NTPase"/>
</dbReference>
<dbReference type="InterPro" id="IPR005225">
    <property type="entry name" value="Small_GTP-bd"/>
</dbReference>
<dbReference type="InterPro" id="IPR000795">
    <property type="entry name" value="T_Tr_GTP-bd_dom"/>
</dbReference>
<dbReference type="InterPro" id="IPR000178">
    <property type="entry name" value="TF_IF2_bacterial-like"/>
</dbReference>
<dbReference type="InterPro" id="IPR015760">
    <property type="entry name" value="TIF_IF2"/>
</dbReference>
<dbReference type="InterPro" id="IPR023115">
    <property type="entry name" value="TIF_IF2_dom3"/>
</dbReference>
<dbReference type="InterPro" id="IPR036925">
    <property type="entry name" value="TIF_IF2_dom3_sf"/>
</dbReference>
<dbReference type="InterPro" id="IPR009000">
    <property type="entry name" value="Transl_B-barrel_sf"/>
</dbReference>
<dbReference type="NCBIfam" id="TIGR00487">
    <property type="entry name" value="IF-2"/>
    <property type="match status" value="1"/>
</dbReference>
<dbReference type="NCBIfam" id="TIGR00231">
    <property type="entry name" value="small_GTP"/>
    <property type="match status" value="1"/>
</dbReference>
<dbReference type="PANTHER" id="PTHR43381:SF5">
    <property type="entry name" value="TR-TYPE G DOMAIN-CONTAINING PROTEIN"/>
    <property type="match status" value="1"/>
</dbReference>
<dbReference type="PANTHER" id="PTHR43381">
    <property type="entry name" value="TRANSLATION INITIATION FACTOR IF-2-RELATED"/>
    <property type="match status" value="1"/>
</dbReference>
<dbReference type="Pfam" id="PF22042">
    <property type="entry name" value="EF-G_D2"/>
    <property type="match status" value="1"/>
</dbReference>
<dbReference type="Pfam" id="PF00009">
    <property type="entry name" value="GTP_EFTU"/>
    <property type="match status" value="1"/>
</dbReference>
<dbReference type="Pfam" id="PF03144">
    <property type="entry name" value="GTP_EFTU_D2"/>
    <property type="match status" value="1"/>
</dbReference>
<dbReference type="Pfam" id="PF11987">
    <property type="entry name" value="IF-2"/>
    <property type="match status" value="1"/>
</dbReference>
<dbReference type="Pfam" id="PF08364">
    <property type="entry name" value="IF2_assoc"/>
    <property type="match status" value="1"/>
</dbReference>
<dbReference type="Pfam" id="PF04760">
    <property type="entry name" value="IF2_N"/>
    <property type="match status" value="2"/>
</dbReference>
<dbReference type="SUPFAM" id="SSF52156">
    <property type="entry name" value="Initiation factor IF2/eIF5b, domain 3"/>
    <property type="match status" value="1"/>
</dbReference>
<dbReference type="SUPFAM" id="SSF52540">
    <property type="entry name" value="P-loop containing nucleoside triphosphate hydrolases"/>
    <property type="match status" value="1"/>
</dbReference>
<dbReference type="SUPFAM" id="SSF46955">
    <property type="entry name" value="Putative DNA-binding domain"/>
    <property type="match status" value="1"/>
</dbReference>
<dbReference type="SUPFAM" id="SSF50447">
    <property type="entry name" value="Translation proteins"/>
    <property type="match status" value="2"/>
</dbReference>
<dbReference type="PROSITE" id="PS51722">
    <property type="entry name" value="G_TR_2"/>
    <property type="match status" value="1"/>
</dbReference>
<dbReference type="PROSITE" id="PS01176">
    <property type="entry name" value="IF2"/>
    <property type="match status" value="1"/>
</dbReference>
<protein>
    <recommendedName>
        <fullName evidence="2">Translation initiation factor IF-2</fullName>
    </recommendedName>
</protein>